<keyword id="KW-0255">Endonuclease</keyword>
<keyword id="KW-0378">Hydrolase</keyword>
<keyword id="KW-0489">Methyltransferase</keyword>
<keyword id="KW-0540">Nuclease</keyword>
<keyword id="KW-0688">Ribosomal frameshifting</keyword>
<keyword id="KW-0808">Transferase</keyword>
<proteinExistence type="inferred from homology"/>
<feature type="chain" id="PRO_0000037432" description="Uridylate-specific endoribonuclease" evidence="1">
    <location>
        <begin position="1" status="less than"/>
        <end position="219"/>
    </location>
</feature>
<feature type="chain" id="PRO_0000037433" description="Putative 2'-O-methyl transferase" evidence="1">
    <location>
        <begin position="220"/>
        <end position="521"/>
    </location>
</feature>
<feature type="domain" description="AV-Nsp11N/CoV-Nsp15M" evidence="4">
    <location>
        <begin position="1" status="less than"/>
        <end position="58"/>
    </location>
</feature>
<feature type="domain" description="NendoU" evidence="3">
    <location>
        <begin position="75"/>
        <end position="216"/>
    </location>
</feature>
<feature type="domain" description="Nidovirus-type SAM-dependent 2'-O-MTase" evidence="2">
    <location>
        <begin position="219"/>
        <end position="518"/>
    </location>
</feature>
<feature type="active site" evidence="3">
    <location>
        <position position="104"/>
    </location>
</feature>
<feature type="active site" evidence="3">
    <location>
        <position position="119"/>
    </location>
</feature>
<feature type="active site" evidence="3">
    <location>
        <position position="159"/>
    </location>
</feature>
<feature type="active site" evidence="2">
    <location>
        <position position="263"/>
    </location>
</feature>
<feature type="active site" evidence="2">
    <location>
        <position position="347"/>
    </location>
</feature>
<feature type="active site" evidence="2">
    <location>
        <position position="391"/>
    </location>
</feature>
<feature type="active site" evidence="2">
    <location>
        <position position="424"/>
    </location>
</feature>
<feature type="site" description="Cleavage; by 3CL-PRO" evidence="1">
    <location>
        <begin position="219"/>
        <end position="220"/>
    </location>
</feature>
<feature type="non-terminal residue">
    <location>
        <position position="1"/>
    </location>
</feature>
<organismHost>
    <name type="scientific">Gallus gallus</name>
    <name type="common">Chicken</name>
    <dbReference type="NCBI Taxonomy" id="9031"/>
</organismHost>
<protein>
    <recommendedName>
        <fullName>Replicase polyprotein 1ab</fullName>
        <shortName>pp1ab</shortName>
    </recommendedName>
    <alternativeName>
        <fullName>ORF1ab polyprotein</fullName>
    </alternativeName>
    <component>
        <recommendedName>
            <fullName>Uridylate-specific endoribonuclease</fullName>
            <ecNumber>3.1.-.-</ecNumber>
        </recommendedName>
        <alternativeName>
            <fullName>NendoU</fullName>
        </alternativeName>
        <alternativeName>
            <fullName>nsp15</fullName>
        </alternativeName>
        <alternativeName>
            <fullName>p39</fullName>
        </alternativeName>
    </component>
    <component>
        <recommendedName>
            <fullName>Putative 2'-O-methyl transferase</fullName>
            <ecNumber>2.1.1.-</ecNumber>
        </recommendedName>
        <alternativeName>
            <fullName>nsp16</fullName>
        </alternativeName>
        <alternativeName>
            <fullName>p35</fullName>
        </alternativeName>
    </component>
</protein>
<accession>P12723</accession>
<name>R1AB_IBVK</name>
<evidence type="ECO:0000250" key="1"/>
<evidence type="ECO:0000255" key="2">
    <source>
        <dbReference type="PROSITE-ProRule" id="PRU01300"/>
    </source>
</evidence>
<evidence type="ECO:0000255" key="3">
    <source>
        <dbReference type="PROSITE-ProRule" id="PRU01303"/>
    </source>
</evidence>
<evidence type="ECO:0000255" key="4">
    <source>
        <dbReference type="PROSITE-ProRule" id="PRU01306"/>
    </source>
</evidence>
<evidence type="ECO:0000305" key="5"/>
<reference key="1">
    <citation type="journal article" date="1988" name="Virology">
        <title>Cloning and sequencing of genes encoding structural proteins of avian infectious bronchitis virus.</title>
        <authorList>
            <person name="Sutou S."/>
            <person name="Sato S."/>
            <person name="Okabe T."/>
            <person name="Nakai M."/>
            <person name="Sasaki N."/>
        </authorList>
    </citation>
    <scope>NUCLEOTIDE SEQUENCE [GENOMIC RNA]</scope>
</reference>
<organism>
    <name type="scientific">Avian infectious bronchitis virus (strain KB8523)</name>
    <name type="common">IBV</name>
    <dbReference type="NCBI Taxonomy" id="11126"/>
    <lineage>
        <taxon>Viruses</taxon>
        <taxon>Riboviria</taxon>
        <taxon>Orthornavirae</taxon>
        <taxon>Pisuviricota</taxon>
        <taxon>Pisoniviricetes</taxon>
        <taxon>Nidovirales</taxon>
        <taxon>Cornidovirineae</taxon>
        <taxon>Coronaviridae</taxon>
        <taxon>Orthocoronavirinae</taxon>
        <taxon>Gammacoronavirus</taxon>
        <taxon>Igacovirus</taxon>
        <taxon>Avian coronavirus</taxon>
    </lineage>
</organism>
<dbReference type="EC" id="3.1.-.-"/>
<dbReference type="EC" id="2.1.1.-"/>
<dbReference type="EMBL" id="M21515">
    <property type="protein sequence ID" value="AAA66577.1"/>
    <property type="molecule type" value="Genomic_RNA"/>
</dbReference>
<dbReference type="PIR" id="A29249">
    <property type="entry name" value="A29249"/>
</dbReference>
<dbReference type="SMR" id="P12723"/>
<dbReference type="GO" id="GO:0004519">
    <property type="term" value="F:endonuclease activity"/>
    <property type="evidence" value="ECO:0007669"/>
    <property type="project" value="UniProtKB-KW"/>
</dbReference>
<dbReference type="GO" id="GO:0004483">
    <property type="term" value="F:mRNA (nucleoside-2'-O-)-methyltransferase activity"/>
    <property type="evidence" value="ECO:0007669"/>
    <property type="project" value="InterPro"/>
</dbReference>
<dbReference type="GO" id="GO:0004540">
    <property type="term" value="F:RNA nuclease activity"/>
    <property type="evidence" value="ECO:0007669"/>
    <property type="project" value="UniProtKB-ARBA"/>
</dbReference>
<dbReference type="GO" id="GO:0032259">
    <property type="term" value="P:methylation"/>
    <property type="evidence" value="ECO:0007669"/>
    <property type="project" value="UniProtKB-KW"/>
</dbReference>
<dbReference type="GO" id="GO:0075523">
    <property type="term" value="P:viral translational frameshifting"/>
    <property type="evidence" value="ECO:0007669"/>
    <property type="project" value="UniProtKB-KW"/>
</dbReference>
<dbReference type="CDD" id="cd23529">
    <property type="entry name" value="capping_2-OMTase_gammaCoV_Nsp16"/>
    <property type="match status" value="1"/>
</dbReference>
<dbReference type="CDD" id="cd21161">
    <property type="entry name" value="NendoU_cv_Nsp15-like"/>
    <property type="match status" value="1"/>
</dbReference>
<dbReference type="Gene3D" id="3.40.50.11580">
    <property type="match status" value="1"/>
</dbReference>
<dbReference type="Gene3D" id="3.40.50.150">
    <property type="entry name" value="Vaccinia Virus protein VP39"/>
    <property type="match status" value="1"/>
</dbReference>
<dbReference type="InterPro" id="IPR046440">
    <property type="entry name" value="AV_NSP11N_COV_NSP15M"/>
</dbReference>
<dbReference type="InterPro" id="IPR037227">
    <property type="entry name" value="EndoU-like"/>
</dbReference>
<dbReference type="InterPro" id="IPR043609">
    <property type="entry name" value="NendoU_nidovirus"/>
</dbReference>
<dbReference type="InterPro" id="IPR046438">
    <property type="entry name" value="NIV_2_O_MTASE"/>
</dbReference>
<dbReference type="InterPro" id="IPR043174">
    <property type="entry name" value="NSP15_middle_sf"/>
</dbReference>
<dbReference type="InterPro" id="IPR044401">
    <property type="entry name" value="NSP15_NendoU_CoV"/>
</dbReference>
<dbReference type="InterPro" id="IPR009461">
    <property type="entry name" value="NSP16_CoV-like"/>
</dbReference>
<dbReference type="InterPro" id="IPR029063">
    <property type="entry name" value="SAM-dependent_MTases_sf"/>
</dbReference>
<dbReference type="Pfam" id="PF06460">
    <property type="entry name" value="CoV_Methyltr_2"/>
    <property type="match status" value="1"/>
</dbReference>
<dbReference type="Pfam" id="PF19215">
    <property type="entry name" value="CoV_NSP15_C"/>
    <property type="match status" value="1"/>
</dbReference>
<dbReference type="SUPFAM" id="SSF142877">
    <property type="entry name" value="EndoU-like"/>
    <property type="match status" value="1"/>
</dbReference>
<dbReference type="SUPFAM" id="SSF53335">
    <property type="entry name" value="S-adenosyl-L-methionine-dependent methyltransferases"/>
    <property type="match status" value="1"/>
</dbReference>
<dbReference type="PROSITE" id="PS51961">
    <property type="entry name" value="AV_NSP11N_COV_NSP15M"/>
    <property type="match status" value="1"/>
</dbReference>
<dbReference type="PROSITE" id="PS51958">
    <property type="entry name" value="NENDOU"/>
    <property type="match status" value="1"/>
</dbReference>
<dbReference type="PROSITE" id="PS51955">
    <property type="entry name" value="NIV_2_O_MTASE"/>
    <property type="match status" value="1"/>
</dbReference>
<gene>
    <name type="primary">rep</name>
    <name type="ORF">1a-1b</name>
</gene>
<comment type="function">
    <text>The replicase polyprotein of coronaviruses is a multifunctional protein: it contains the activities necessary for the transcription of negative stranded RNA, leader RNA, subgenomic mRNAs and progeny virion RNA as well as proteinases responsible for the cleavage of the polyprotein into functional products.</text>
</comment>
<comment type="function">
    <text evidence="1">NendoU is a Mn(2+)-dependent, uridylate-specific enzyme, which leaves 2'-3'-cyclic phosphates 5' to the cleaved bond.</text>
</comment>
<comment type="alternative products">
    <event type="ribosomal frameshifting"/>
    <isoform>
        <id>P12723-1</id>
        <name>Replicase polyprotein 1ab</name>
        <name>pp1ab</name>
        <sequence type="displayed"/>
    </isoform>
    <isoform>
        <id>P12723-2</id>
        <name>Replicase polyprotein 1a</name>
        <name>pp1a</name>
        <name>ORF1a polyprotein</name>
        <sequence type="not described"/>
    </isoform>
</comment>
<comment type="miscellaneous">
    <molecule>Isoform Replicase polyprotein 1ab</molecule>
    <text>Produced by -1 ribosomal frameshifting at the 1a-1b genes boundary.</text>
</comment>
<comment type="miscellaneous">
    <molecule>Isoform Replicase polyprotein 1a</molecule>
    <text evidence="5">Produced by conventional translation.</text>
</comment>
<sequence>GGGGQSFLAADNAVLVSTQCYKRHSYVEIPSNLLVQNGMSLKDGANLYVYKRVNGAFVTLPNTLNTQGRSYETFEPRSDVERDFLDMSEEDFVEKYGKDLGLQHILYGEVDKPQLGGLHTVIGMYRLLRANKLNAKSVTNSDSDVMQNYFVLADNGSYKQVCTVVDLLLDDFLELLRNILNEYGTNKSKVVTVSIDYHSINFMTWFEDGSIKTCYPQLQSAWTCGYNMPELYKVQNCVMEPCNIPNYGVGITLPSGIMMNVAKYTQLCQYLSKTTVCVPHNMRVMHFGAGSDKGVAPGSTVLKQWLPEGTLLVDTDIVDYVSDAHVSVLSDCNKYKTEHKFDLVISDMYTDNDSKRKHGGVIANNGNDDVFIYLSSFLRNNLALGGSFAVKLTETSWHESLYDIAQDCAWWTMFCTAVNASSSEAFLIGVNYLGASVKVKVSGKTLHANYIFWRNCNYLQTSAYSIFDVAKFDLRLKATPVVNLKTEQKTDLVFNLIKCGKLLVRDVGNTSFTSDSFVCTM</sequence>